<name>SMAG1_RAT</name>
<evidence type="ECO:0000250" key="1"/>
<evidence type="ECO:0000250" key="2">
    <source>
        <dbReference type="UniProtKB" id="Q8CBY1"/>
    </source>
</evidence>
<evidence type="ECO:0000256" key="3">
    <source>
        <dbReference type="SAM" id="MobiDB-lite"/>
    </source>
</evidence>
<evidence type="ECO:0000269" key="4">
    <source>
    </source>
</evidence>
<evidence type="ECO:0000305" key="5"/>
<evidence type="ECO:0007744" key="6">
    <source>
    </source>
</evidence>
<reference key="1">
    <citation type="journal article" date="2004" name="Genome Res.">
        <title>The status, quality, and expansion of the NIH full-length cDNA project: the Mammalian Gene Collection (MGC).</title>
        <authorList>
            <consortium name="The MGC Project Team"/>
        </authorList>
    </citation>
    <scope>NUCLEOTIDE SEQUENCE [LARGE SCALE MRNA]</scope>
    <source>
        <tissue>Testis</tissue>
    </source>
</reference>
<reference key="2">
    <citation type="journal article" date="2005" name="J. Biol. Chem.">
        <title>Mammalian Smaug is a translational repressor that forms cytoplasmic foci similar to stress granules.</title>
        <authorList>
            <person name="Baez M.V."/>
            <person name="Boccaccio G.L."/>
        </authorList>
    </citation>
    <scope>TISSUE SPECIFICITY</scope>
</reference>
<reference key="3">
    <citation type="journal article" date="2012" name="Nat. Commun.">
        <title>Quantitative maps of protein phosphorylation sites across 14 different rat organs and tissues.</title>
        <authorList>
            <person name="Lundby A."/>
            <person name="Secher A."/>
            <person name="Lage K."/>
            <person name="Nordsborg N.B."/>
            <person name="Dmytriyev A."/>
            <person name="Lundby C."/>
            <person name="Olsen J.V."/>
        </authorList>
    </citation>
    <scope>PHOSPHORYLATION [LARGE SCALE ANALYSIS] AT SER-67; SER-319; THR-323 AND SER-472</scope>
    <scope>IDENTIFICATION BY MASS SPECTROMETRY [LARGE SCALE ANALYSIS]</scope>
</reference>
<dbReference type="EMBL" id="BC168894">
    <property type="protein sequence ID" value="AAI68894.1"/>
    <property type="molecule type" value="mRNA"/>
</dbReference>
<dbReference type="RefSeq" id="NP_001386703.1">
    <property type="nucleotide sequence ID" value="NM_001399774.2"/>
</dbReference>
<dbReference type="SMR" id="B5DF21"/>
<dbReference type="FunCoup" id="B5DF21">
    <property type="interactions" value="1632"/>
</dbReference>
<dbReference type="STRING" id="10116.ENSRNOP00000069137"/>
<dbReference type="iPTMnet" id="B5DF21"/>
<dbReference type="PhosphoSitePlus" id="B5DF21"/>
<dbReference type="PaxDb" id="10116-ENSRNOP00000057570"/>
<dbReference type="PeptideAtlas" id="B5DF21"/>
<dbReference type="GeneID" id="305826"/>
<dbReference type="UCSC" id="RGD:1310361">
    <property type="organism name" value="rat"/>
</dbReference>
<dbReference type="AGR" id="RGD:1310361"/>
<dbReference type="RGD" id="1310361">
    <property type="gene designation" value="Samd4a"/>
</dbReference>
<dbReference type="eggNOG" id="KOG3791">
    <property type="taxonomic scope" value="Eukaryota"/>
</dbReference>
<dbReference type="InParanoid" id="B5DF21"/>
<dbReference type="PhylomeDB" id="B5DF21"/>
<dbReference type="PRO" id="PR:B5DF21"/>
<dbReference type="Proteomes" id="UP000002494">
    <property type="component" value="Unplaced"/>
</dbReference>
<dbReference type="GO" id="GO:0030425">
    <property type="term" value="C:dendrite"/>
    <property type="evidence" value="ECO:0007669"/>
    <property type="project" value="UniProtKB-SubCell"/>
</dbReference>
<dbReference type="GO" id="GO:0098978">
    <property type="term" value="C:glutamatergic synapse"/>
    <property type="evidence" value="ECO:0000314"/>
    <property type="project" value="SynGO"/>
</dbReference>
<dbReference type="GO" id="GO:0000932">
    <property type="term" value="C:P-body"/>
    <property type="evidence" value="ECO:0000318"/>
    <property type="project" value="GO_Central"/>
</dbReference>
<dbReference type="GO" id="GO:0014069">
    <property type="term" value="C:postsynaptic density"/>
    <property type="evidence" value="ECO:0000314"/>
    <property type="project" value="SynGO"/>
</dbReference>
<dbReference type="GO" id="GO:0045202">
    <property type="term" value="C:synapse"/>
    <property type="evidence" value="ECO:0000266"/>
    <property type="project" value="RGD"/>
</dbReference>
<dbReference type="GO" id="GO:0003729">
    <property type="term" value="F:mRNA binding"/>
    <property type="evidence" value="ECO:0000318"/>
    <property type="project" value="GO_Central"/>
</dbReference>
<dbReference type="GO" id="GO:0030371">
    <property type="term" value="F:translation repressor activity"/>
    <property type="evidence" value="ECO:0000266"/>
    <property type="project" value="RGD"/>
</dbReference>
<dbReference type="GO" id="GO:0000289">
    <property type="term" value="P:nuclear-transcribed mRNA poly(A) tail shortening"/>
    <property type="evidence" value="ECO:0000318"/>
    <property type="project" value="GO_Central"/>
</dbReference>
<dbReference type="GO" id="GO:0045727">
    <property type="term" value="P:positive regulation of translation"/>
    <property type="evidence" value="ECO:0000266"/>
    <property type="project" value="RGD"/>
</dbReference>
<dbReference type="GO" id="GO:0150052">
    <property type="term" value="P:regulation of postsynapse assembly"/>
    <property type="evidence" value="ECO:0000314"/>
    <property type="project" value="SynGO"/>
</dbReference>
<dbReference type="CDD" id="cd09557">
    <property type="entry name" value="SAM_Smaug"/>
    <property type="match status" value="1"/>
</dbReference>
<dbReference type="FunFam" id="1.10.150.50:FF:000013">
    <property type="entry name" value="Protein Smaug homolog 1 isoform 2"/>
    <property type="match status" value="1"/>
</dbReference>
<dbReference type="FunFam" id="1.25.40.170:FF:000001">
    <property type="entry name" value="Protein Smaug homolog 1 isoform 2"/>
    <property type="match status" value="1"/>
</dbReference>
<dbReference type="FunFam" id="1.25.40.170:FF:000002">
    <property type="entry name" value="Protein Smaug homolog 1 isoform 2"/>
    <property type="match status" value="1"/>
</dbReference>
<dbReference type="Gene3D" id="1.25.40.170">
    <property type="entry name" value="Smaug, PHAT domain"/>
    <property type="match status" value="2"/>
</dbReference>
<dbReference type="Gene3D" id="1.10.150.50">
    <property type="entry name" value="Transcription Factor, Ets-1"/>
    <property type="match status" value="1"/>
</dbReference>
<dbReference type="InterPro" id="IPR037093">
    <property type="entry name" value="PHAT_dom_sf"/>
</dbReference>
<dbReference type="InterPro" id="IPR001660">
    <property type="entry name" value="SAM"/>
</dbReference>
<dbReference type="InterPro" id="IPR013761">
    <property type="entry name" value="SAM/pointed_sf"/>
</dbReference>
<dbReference type="InterPro" id="IPR050897">
    <property type="entry name" value="SMAUG/VTS1_RNA-bind"/>
</dbReference>
<dbReference type="InterPro" id="IPR037634">
    <property type="entry name" value="Smaug_SAM"/>
</dbReference>
<dbReference type="PANTHER" id="PTHR12515:SF8">
    <property type="entry name" value="PROTEIN SMAUG HOMOLOG 1"/>
    <property type="match status" value="1"/>
</dbReference>
<dbReference type="PANTHER" id="PTHR12515">
    <property type="entry name" value="STERILE ALPHA MOTIF DOMAIN CONTAINING PROTEIN 4-RELATED"/>
    <property type="match status" value="1"/>
</dbReference>
<dbReference type="Pfam" id="PF00536">
    <property type="entry name" value="SAM_1"/>
    <property type="match status" value="1"/>
</dbReference>
<dbReference type="SMART" id="SM00454">
    <property type="entry name" value="SAM"/>
    <property type="match status" value="1"/>
</dbReference>
<dbReference type="SUPFAM" id="SSF47769">
    <property type="entry name" value="SAM/Pointed domain"/>
    <property type="match status" value="1"/>
</dbReference>
<gene>
    <name type="primary">Samd4a</name>
    <name type="synonym">Smaug1</name>
</gene>
<accession>B5DF21</accession>
<comment type="function">
    <text evidence="1">Acts as a translational repressor of SRE-containing messengers.</text>
</comment>
<comment type="subcellular location">
    <subcellularLocation>
        <location evidence="1">Cytoplasm</location>
    </subcellularLocation>
    <subcellularLocation>
        <location evidence="1">Cell projection</location>
        <location evidence="1">Dendrite</location>
    </subcellularLocation>
    <subcellularLocation>
        <location evidence="1">Synapse</location>
        <location evidence="1">Synaptosome</location>
    </subcellularLocation>
    <text evidence="1">Enriched in synaptoneurosomes. Shuttles between the nucleus and the cytoplasm in a CRM1-dependent manner. Colocalizes throughout the cytoplasm in granules with polyadenylated RNAs, PABPC1 and STAU1. Also frequently colocalizes in cytoplasmic stress granule-like foci with ELAVL1, TIA1 and TIAL1 (By similarity).</text>
</comment>
<comment type="tissue specificity">
    <text evidence="4">Expressed in brain (at protein level).</text>
</comment>
<comment type="similarity">
    <text evidence="5">Belongs to the SMAUG family.</text>
</comment>
<proteinExistence type="evidence at protein level"/>
<organism>
    <name type="scientific">Rattus norvegicus</name>
    <name type="common">Rat</name>
    <dbReference type="NCBI Taxonomy" id="10116"/>
    <lineage>
        <taxon>Eukaryota</taxon>
        <taxon>Metazoa</taxon>
        <taxon>Chordata</taxon>
        <taxon>Craniata</taxon>
        <taxon>Vertebrata</taxon>
        <taxon>Euteleostomi</taxon>
        <taxon>Mammalia</taxon>
        <taxon>Eutheria</taxon>
        <taxon>Euarchontoglires</taxon>
        <taxon>Glires</taxon>
        <taxon>Rodentia</taxon>
        <taxon>Myomorpha</taxon>
        <taxon>Muroidea</taxon>
        <taxon>Muridae</taxon>
        <taxon>Murinae</taxon>
        <taxon>Rattus</taxon>
    </lineage>
</organism>
<keyword id="KW-0966">Cell projection</keyword>
<keyword id="KW-0963">Cytoplasm</keyword>
<keyword id="KW-0488">Methylation</keyword>
<keyword id="KW-0597">Phosphoprotein</keyword>
<keyword id="KW-1185">Reference proteome</keyword>
<keyword id="KW-0678">Repressor</keyword>
<keyword id="KW-0770">Synapse</keyword>
<keyword id="KW-0771">Synaptosome</keyword>
<keyword id="KW-0810">Translation regulation</keyword>
<sequence>MKLLPKILAHSIDHNQHIEESRQLLSYALIHPATSLEDRSALAMWLNHLEDRTSTSFGSQNRGRSDSVDYGQTHYYHQRQNSEDKLNGWQNSRDSGICISASNWQDKSLGCENGHVPLYSSSSVPATINTIGTSTSTILSGQAHHSPLKRSVSLTPPMNVPNQPLGHGWMSHEDLRARGPQCLPSDHAPLSPQSSVASSGSGGSEHLEDQTTARNTFQEEGSGMKDVPAWLKSLRLHKYAALFSQMTYEEMMALTECQLEAQNVTKGARHKIVISIQKLKERQNLLKSLERDIIEGGSLRIPLQELHQMILTPIKAYSSPSTTPEVRRREPLLMESPSPDCKDSAATVTSATASASAGASGGLQPPQLSSCDGELAVAPLPEGDLPGQFTRVMGKVCTQLLVSRPDEENISSYLQLLDKCLVHEAFTETQKKRLLSWKQQVQKLFRSFPRKTLLDISGYRQQRNRGFGQSNSLPTASSVGSGMGRRNPRQYQIASRNVPSARLGLLGTSGFVSSNQRHTAANPTIMKQGRQNLWFANPGGSNSVPSRTHSSVQKTRSLPVHTSPQNMLMFQQPEFQLPVTEPDINNRLESLCLSMTEHALGDGVDRTSTI</sequence>
<protein>
    <recommendedName>
        <fullName>Protein Smaug homolog 1</fullName>
        <shortName>Smaug 1</shortName>
    </recommendedName>
    <alternativeName>
        <fullName>Sterile alpha motif domain-containing protein 4A</fullName>
    </alternativeName>
</protein>
<feature type="chain" id="PRO_0000380125" description="Protein Smaug homolog 1">
    <location>
        <begin position="1"/>
        <end position="610"/>
    </location>
</feature>
<feature type="domain" description="SAM">
    <location>
        <begin position="222"/>
        <end position="295"/>
    </location>
</feature>
<feature type="region of interest" description="Disordered" evidence="3">
    <location>
        <begin position="177"/>
        <end position="222"/>
    </location>
</feature>
<feature type="region of interest" description="Disordered" evidence="3">
    <location>
        <begin position="318"/>
        <end position="366"/>
    </location>
</feature>
<feature type="region of interest" description="Disordered" evidence="3">
    <location>
        <begin position="464"/>
        <end position="487"/>
    </location>
</feature>
<feature type="compositionally biased region" description="Low complexity" evidence="3">
    <location>
        <begin position="344"/>
        <end position="358"/>
    </location>
</feature>
<feature type="compositionally biased region" description="Polar residues" evidence="3">
    <location>
        <begin position="467"/>
        <end position="480"/>
    </location>
</feature>
<feature type="modified residue" description="Phosphoserine" evidence="6">
    <location>
        <position position="67"/>
    </location>
</feature>
<feature type="modified residue" description="Phosphoserine" evidence="6">
    <location>
        <position position="319"/>
    </location>
</feature>
<feature type="modified residue" description="Phosphothreonine" evidence="6">
    <location>
        <position position="323"/>
    </location>
</feature>
<feature type="modified residue" description="Omega-N-methylarginine" evidence="2">
    <location>
        <position position="465"/>
    </location>
</feature>
<feature type="modified residue" description="Phosphoserine" evidence="6">
    <location>
        <position position="472"/>
    </location>
</feature>